<keyword id="KW-0010">Activator</keyword>
<keyword id="KW-0238">DNA-binding</keyword>
<keyword id="KW-0479">Metal-binding</keyword>
<keyword id="KW-0539">Nucleus</keyword>
<keyword id="KW-1185">Reference proteome</keyword>
<keyword id="KW-0677">Repeat</keyword>
<keyword id="KW-0804">Transcription</keyword>
<keyword id="KW-0805">Transcription regulation</keyword>
<keyword id="KW-0862">Zinc</keyword>
<keyword id="KW-0863">Zinc-finger</keyword>
<feature type="chain" id="PRO_0000046799" description="Metallothionein expression activator">
    <location>
        <begin position="1"/>
        <end position="533"/>
    </location>
</feature>
<feature type="zinc finger region" description="C2H2-type 1" evidence="2">
    <location>
        <begin position="443"/>
        <end position="472"/>
    </location>
</feature>
<feature type="zinc finger region" description="C2H2-type 2" evidence="2">
    <location>
        <begin position="473"/>
        <end position="500"/>
    </location>
</feature>
<feature type="zinc finger region" description="C2H2-type 3; atypical" evidence="2">
    <location>
        <begin position="501"/>
        <end position="524"/>
    </location>
</feature>
<sequence length="533" mass="59842">MSLSYLSSSSQKSFESFRQEESPACNHSYQRDYETFGDSKHTSFSSFAPFENEVSLNQAVIPSPPSHLQNFQDQFDYSSVLKTPFNPLLEANSAYFLSNQISLPDSHSYASSFDASLSPPSSPLTCVSQIHTEQNFNNNDAFSLTNSQQAFSEIGYDASNWIDELDSQQQVLSFPEFDIPEIKTETCSNKDHLENFDYLSSSIPETSGPASSVLPSSSQLESFNEFMFLPSSPPGLDEINGAPSFEELNFQISQPSPAHPVDLSSPETAPNISPVSPFAQLVKLEPTSPQKPSFALDSSFSHLDVCRHTDNQKAFAKLSSPAEYVSEFEKFSSVCDHGLDISNANINNTLTQQFALSAPYESCIVTKKPEPCITVKEEEQLAPKIESADLSITPQVTEHDSKPPVRISYDHRCKTRKQSTRICRIPPETMASLYCGPEADGKYVCLYNGCNKRIARKYNVESHIQTHLSDRPYRCDLCKAGFVRHHDLKRHLRIHENGRPYVCECLKRFNRLDALNRHKQRNICVGGVDRRQH</sequence>
<dbReference type="EMBL" id="CU329670">
    <property type="protein sequence ID" value="CAB11298.1"/>
    <property type="molecule type" value="Genomic_DNA"/>
</dbReference>
<dbReference type="PIR" id="T39062">
    <property type="entry name" value="T39062"/>
</dbReference>
<dbReference type="RefSeq" id="NP_594109.1">
    <property type="nucleotide sequence ID" value="NM_001019533.2"/>
</dbReference>
<dbReference type="SMR" id="O14258"/>
<dbReference type="BioGRID" id="278157">
    <property type="interactions" value="136"/>
</dbReference>
<dbReference type="FunCoup" id="O14258">
    <property type="interactions" value="245"/>
</dbReference>
<dbReference type="IntAct" id="O14258">
    <property type="interactions" value="1"/>
</dbReference>
<dbReference type="MINT" id="O14258"/>
<dbReference type="STRING" id="284812.O14258"/>
<dbReference type="iPTMnet" id="O14258"/>
<dbReference type="PaxDb" id="4896-SPAC6G10.12c.1"/>
<dbReference type="EnsemblFungi" id="SPAC6G10.12c.1">
    <property type="protein sequence ID" value="SPAC6G10.12c.1:pep"/>
    <property type="gene ID" value="SPAC6G10.12c"/>
</dbReference>
<dbReference type="GeneID" id="2541661"/>
<dbReference type="KEGG" id="spo:2541661"/>
<dbReference type="PomBase" id="SPAC6G10.12c">
    <property type="gene designation" value="ace2"/>
</dbReference>
<dbReference type="VEuPathDB" id="FungiDB:SPAC6G10.12c"/>
<dbReference type="eggNOG" id="KOG1721">
    <property type="taxonomic scope" value="Eukaryota"/>
</dbReference>
<dbReference type="HOGENOM" id="CLU_511062_0_0_1"/>
<dbReference type="InParanoid" id="O14258"/>
<dbReference type="OMA" id="HENGRPY"/>
<dbReference type="PhylomeDB" id="O14258"/>
<dbReference type="PRO" id="PR:O14258"/>
<dbReference type="Proteomes" id="UP000002485">
    <property type="component" value="Chromosome I"/>
</dbReference>
<dbReference type="GO" id="GO:0005634">
    <property type="term" value="C:nucleus"/>
    <property type="evidence" value="ECO:0000314"/>
    <property type="project" value="PomBase"/>
</dbReference>
<dbReference type="GO" id="GO:0001228">
    <property type="term" value="F:DNA-binding transcription activator activity, RNA polymerase II-specific"/>
    <property type="evidence" value="ECO:0000315"/>
    <property type="project" value="PomBase"/>
</dbReference>
<dbReference type="GO" id="GO:0000981">
    <property type="term" value="F:DNA-binding transcription factor activity, RNA polymerase II-specific"/>
    <property type="evidence" value="ECO:0000318"/>
    <property type="project" value="GO_Central"/>
</dbReference>
<dbReference type="GO" id="GO:0000978">
    <property type="term" value="F:RNA polymerase II cis-regulatory region sequence-specific DNA binding"/>
    <property type="evidence" value="ECO:0000314"/>
    <property type="project" value="PomBase"/>
</dbReference>
<dbReference type="GO" id="GO:0008270">
    <property type="term" value="F:zinc ion binding"/>
    <property type="evidence" value="ECO:0007669"/>
    <property type="project" value="UniProtKB-KW"/>
</dbReference>
<dbReference type="GO" id="GO:0006357">
    <property type="term" value="P:regulation of transcription by RNA polymerase II"/>
    <property type="evidence" value="ECO:0000318"/>
    <property type="project" value="GO_Central"/>
</dbReference>
<dbReference type="FunFam" id="3.30.160.60:FF:000072">
    <property type="entry name" value="zinc finger protein 143 isoform X1"/>
    <property type="match status" value="1"/>
</dbReference>
<dbReference type="Gene3D" id="3.30.160.60">
    <property type="entry name" value="Classic Zinc Finger"/>
    <property type="match status" value="2"/>
</dbReference>
<dbReference type="InterPro" id="IPR050329">
    <property type="entry name" value="GLI_C2H2-zinc-finger"/>
</dbReference>
<dbReference type="InterPro" id="IPR036236">
    <property type="entry name" value="Znf_C2H2_sf"/>
</dbReference>
<dbReference type="InterPro" id="IPR013087">
    <property type="entry name" value="Znf_C2H2_type"/>
</dbReference>
<dbReference type="PANTHER" id="PTHR19818:SF144">
    <property type="entry name" value="METALLOTHIONEIN EXPRESSION ACTIVATOR-RELATED"/>
    <property type="match status" value="1"/>
</dbReference>
<dbReference type="PANTHER" id="PTHR19818">
    <property type="entry name" value="ZINC FINGER PROTEIN ZIC AND GLI"/>
    <property type="match status" value="1"/>
</dbReference>
<dbReference type="Pfam" id="PF00096">
    <property type="entry name" value="zf-C2H2"/>
    <property type="match status" value="1"/>
</dbReference>
<dbReference type="Pfam" id="PF13912">
    <property type="entry name" value="zf-C2H2_6"/>
    <property type="match status" value="1"/>
</dbReference>
<dbReference type="SMART" id="SM00355">
    <property type="entry name" value="ZnF_C2H2"/>
    <property type="match status" value="2"/>
</dbReference>
<dbReference type="SUPFAM" id="SSF57667">
    <property type="entry name" value="beta-beta-alpha zinc fingers"/>
    <property type="match status" value="2"/>
</dbReference>
<dbReference type="PROSITE" id="PS00028">
    <property type="entry name" value="ZINC_FINGER_C2H2_1"/>
    <property type="match status" value="2"/>
</dbReference>
<dbReference type="PROSITE" id="PS50157">
    <property type="entry name" value="ZINC_FINGER_C2H2_2"/>
    <property type="match status" value="2"/>
</dbReference>
<name>ACE2_SCHPO</name>
<gene>
    <name type="primary">ace2</name>
    <name type="ORF">SPAC6G10.12c</name>
</gene>
<comment type="function">
    <text evidence="3">Regulates the transcription of genes required for cell separation.</text>
</comment>
<comment type="subcellular location">
    <subcellularLocation>
        <location evidence="1">Nucleus</location>
    </subcellularLocation>
</comment>
<evidence type="ECO:0000250" key="1"/>
<evidence type="ECO:0000255" key="2">
    <source>
        <dbReference type="PROSITE-ProRule" id="PRU00042"/>
    </source>
</evidence>
<evidence type="ECO:0000269" key="3">
    <source>
    </source>
</evidence>
<accession>O14258</accession>
<protein>
    <recommendedName>
        <fullName>Metallothionein expression activator</fullName>
    </recommendedName>
</protein>
<organism>
    <name type="scientific">Schizosaccharomyces pombe (strain 972 / ATCC 24843)</name>
    <name type="common">Fission yeast</name>
    <dbReference type="NCBI Taxonomy" id="284812"/>
    <lineage>
        <taxon>Eukaryota</taxon>
        <taxon>Fungi</taxon>
        <taxon>Dikarya</taxon>
        <taxon>Ascomycota</taxon>
        <taxon>Taphrinomycotina</taxon>
        <taxon>Schizosaccharomycetes</taxon>
        <taxon>Schizosaccharomycetales</taxon>
        <taxon>Schizosaccharomycetaceae</taxon>
        <taxon>Schizosaccharomyces</taxon>
    </lineage>
</organism>
<reference key="1">
    <citation type="journal article" date="2002" name="Nature">
        <title>The genome sequence of Schizosaccharomyces pombe.</title>
        <authorList>
            <person name="Wood V."/>
            <person name="Gwilliam R."/>
            <person name="Rajandream M.A."/>
            <person name="Lyne M.H."/>
            <person name="Lyne R."/>
            <person name="Stewart A."/>
            <person name="Sgouros J.G."/>
            <person name="Peat N."/>
            <person name="Hayles J."/>
            <person name="Baker S.G."/>
            <person name="Basham D."/>
            <person name="Bowman S."/>
            <person name="Brooks K."/>
            <person name="Brown D."/>
            <person name="Brown S."/>
            <person name="Chillingworth T."/>
            <person name="Churcher C.M."/>
            <person name="Collins M."/>
            <person name="Connor R."/>
            <person name="Cronin A."/>
            <person name="Davis P."/>
            <person name="Feltwell T."/>
            <person name="Fraser A."/>
            <person name="Gentles S."/>
            <person name="Goble A."/>
            <person name="Hamlin N."/>
            <person name="Harris D.E."/>
            <person name="Hidalgo J."/>
            <person name="Hodgson G."/>
            <person name="Holroyd S."/>
            <person name="Hornsby T."/>
            <person name="Howarth S."/>
            <person name="Huckle E.J."/>
            <person name="Hunt S."/>
            <person name="Jagels K."/>
            <person name="James K.D."/>
            <person name="Jones L."/>
            <person name="Jones M."/>
            <person name="Leather S."/>
            <person name="McDonald S."/>
            <person name="McLean J."/>
            <person name="Mooney P."/>
            <person name="Moule S."/>
            <person name="Mungall K.L."/>
            <person name="Murphy L.D."/>
            <person name="Niblett D."/>
            <person name="Odell C."/>
            <person name="Oliver K."/>
            <person name="O'Neil S."/>
            <person name="Pearson D."/>
            <person name="Quail M.A."/>
            <person name="Rabbinowitsch E."/>
            <person name="Rutherford K.M."/>
            <person name="Rutter S."/>
            <person name="Saunders D."/>
            <person name="Seeger K."/>
            <person name="Sharp S."/>
            <person name="Skelton J."/>
            <person name="Simmonds M.N."/>
            <person name="Squares R."/>
            <person name="Squares S."/>
            <person name="Stevens K."/>
            <person name="Taylor K."/>
            <person name="Taylor R.G."/>
            <person name="Tivey A."/>
            <person name="Walsh S.V."/>
            <person name="Warren T."/>
            <person name="Whitehead S."/>
            <person name="Woodward J.R."/>
            <person name="Volckaert G."/>
            <person name="Aert R."/>
            <person name="Robben J."/>
            <person name="Grymonprez B."/>
            <person name="Weltjens I."/>
            <person name="Vanstreels E."/>
            <person name="Rieger M."/>
            <person name="Schaefer M."/>
            <person name="Mueller-Auer S."/>
            <person name="Gabel C."/>
            <person name="Fuchs M."/>
            <person name="Duesterhoeft A."/>
            <person name="Fritzc C."/>
            <person name="Holzer E."/>
            <person name="Moestl D."/>
            <person name="Hilbert H."/>
            <person name="Borzym K."/>
            <person name="Langer I."/>
            <person name="Beck A."/>
            <person name="Lehrach H."/>
            <person name="Reinhardt R."/>
            <person name="Pohl T.M."/>
            <person name="Eger P."/>
            <person name="Zimmermann W."/>
            <person name="Wedler H."/>
            <person name="Wambutt R."/>
            <person name="Purnelle B."/>
            <person name="Goffeau A."/>
            <person name="Cadieu E."/>
            <person name="Dreano S."/>
            <person name="Gloux S."/>
            <person name="Lelaure V."/>
            <person name="Mottier S."/>
            <person name="Galibert F."/>
            <person name="Aves S.J."/>
            <person name="Xiang Z."/>
            <person name="Hunt C."/>
            <person name="Moore K."/>
            <person name="Hurst S.M."/>
            <person name="Lucas M."/>
            <person name="Rochet M."/>
            <person name="Gaillardin C."/>
            <person name="Tallada V.A."/>
            <person name="Garzon A."/>
            <person name="Thode G."/>
            <person name="Daga R.R."/>
            <person name="Cruzado L."/>
            <person name="Jimenez J."/>
            <person name="Sanchez M."/>
            <person name="del Rey F."/>
            <person name="Benito J."/>
            <person name="Dominguez A."/>
            <person name="Revuelta J.L."/>
            <person name="Moreno S."/>
            <person name="Armstrong J."/>
            <person name="Forsburg S.L."/>
            <person name="Cerutti L."/>
            <person name="Lowe T."/>
            <person name="McCombie W.R."/>
            <person name="Paulsen I."/>
            <person name="Potashkin J."/>
            <person name="Shpakovski G.V."/>
            <person name="Ussery D."/>
            <person name="Barrell B.G."/>
            <person name="Nurse P."/>
        </authorList>
    </citation>
    <scope>NUCLEOTIDE SEQUENCE [LARGE SCALE GENOMIC DNA]</scope>
    <source>
        <strain>972 / ATCC 24843</strain>
    </source>
</reference>
<reference key="2">
    <citation type="journal article" date="2003" name="J. Cell Sci.">
        <title>The endo-beta-1,3-glucanase eng1p is required for dissolution of the primary septum during cell separation in Schizosaccharomyces pombe.</title>
        <authorList>
            <person name="Martin-Cuadrado A.B."/>
            <person name="Duenas E."/>
            <person name="Sipiczki M."/>
            <person name="de Aldana C.R.V."/>
            <person name="del Rey F."/>
        </authorList>
    </citation>
    <scope>IDENTIFICATION</scope>
    <scope>FUNCTION</scope>
</reference>
<proteinExistence type="inferred from homology"/>